<reference key="1">
    <citation type="journal article" date="2004" name="Proc. Natl. Acad. Sci. U.S.A.">
        <title>Genome sequence of the enterobacterial phytopathogen Erwinia carotovora subsp. atroseptica and characterization of virulence factors.</title>
        <authorList>
            <person name="Bell K.S."/>
            <person name="Sebaihia M."/>
            <person name="Pritchard L."/>
            <person name="Holden M.T.G."/>
            <person name="Hyman L.J."/>
            <person name="Holeva M.C."/>
            <person name="Thomson N.R."/>
            <person name="Bentley S.D."/>
            <person name="Churcher L.J.C."/>
            <person name="Mungall K."/>
            <person name="Atkin R."/>
            <person name="Bason N."/>
            <person name="Brooks K."/>
            <person name="Chillingworth T."/>
            <person name="Clark K."/>
            <person name="Doggett J."/>
            <person name="Fraser A."/>
            <person name="Hance Z."/>
            <person name="Hauser H."/>
            <person name="Jagels K."/>
            <person name="Moule S."/>
            <person name="Norbertczak H."/>
            <person name="Ormond D."/>
            <person name="Price C."/>
            <person name="Quail M.A."/>
            <person name="Sanders M."/>
            <person name="Walker D."/>
            <person name="Whitehead S."/>
            <person name="Salmond G.P.C."/>
            <person name="Birch P.R.J."/>
            <person name="Parkhill J."/>
            <person name="Toth I.K."/>
        </authorList>
    </citation>
    <scope>NUCLEOTIDE SEQUENCE [LARGE SCALE GENOMIC DNA]</scope>
    <source>
        <strain>SCRI 1043 / ATCC BAA-672</strain>
    </source>
</reference>
<dbReference type="EC" id="5.1.1.7" evidence="1"/>
<dbReference type="EMBL" id="BX950851">
    <property type="protein sequence ID" value="CAG77080.1"/>
    <property type="molecule type" value="Genomic_DNA"/>
</dbReference>
<dbReference type="RefSeq" id="WP_011095654.1">
    <property type="nucleotide sequence ID" value="NC_004547.2"/>
</dbReference>
<dbReference type="SMR" id="Q6CZG8"/>
<dbReference type="STRING" id="218491.ECA4183"/>
<dbReference type="KEGG" id="eca:ECA4183"/>
<dbReference type="PATRIC" id="fig|218491.5.peg.4256"/>
<dbReference type="eggNOG" id="COG0253">
    <property type="taxonomic scope" value="Bacteria"/>
</dbReference>
<dbReference type="HOGENOM" id="CLU_053306_1_1_6"/>
<dbReference type="OrthoDB" id="9805408at2"/>
<dbReference type="UniPathway" id="UPA00034">
    <property type="reaction ID" value="UER00025"/>
</dbReference>
<dbReference type="Proteomes" id="UP000007966">
    <property type="component" value="Chromosome"/>
</dbReference>
<dbReference type="GO" id="GO:0005829">
    <property type="term" value="C:cytosol"/>
    <property type="evidence" value="ECO:0007669"/>
    <property type="project" value="TreeGrafter"/>
</dbReference>
<dbReference type="GO" id="GO:0008837">
    <property type="term" value="F:diaminopimelate epimerase activity"/>
    <property type="evidence" value="ECO:0007669"/>
    <property type="project" value="UniProtKB-UniRule"/>
</dbReference>
<dbReference type="GO" id="GO:0009089">
    <property type="term" value="P:lysine biosynthetic process via diaminopimelate"/>
    <property type="evidence" value="ECO:0007669"/>
    <property type="project" value="UniProtKB-UniRule"/>
</dbReference>
<dbReference type="FunFam" id="3.10.310.10:FF:000001">
    <property type="entry name" value="Diaminopimelate epimerase"/>
    <property type="match status" value="1"/>
</dbReference>
<dbReference type="FunFam" id="3.10.310.10:FF:000002">
    <property type="entry name" value="Diaminopimelate epimerase"/>
    <property type="match status" value="1"/>
</dbReference>
<dbReference type="Gene3D" id="3.10.310.10">
    <property type="entry name" value="Diaminopimelate Epimerase, Chain A, domain 1"/>
    <property type="match status" value="2"/>
</dbReference>
<dbReference type="HAMAP" id="MF_00197">
    <property type="entry name" value="DAP_epimerase"/>
    <property type="match status" value="1"/>
</dbReference>
<dbReference type="InterPro" id="IPR018510">
    <property type="entry name" value="DAP_epimerase_AS"/>
</dbReference>
<dbReference type="InterPro" id="IPR001653">
    <property type="entry name" value="DAP_epimerase_DapF"/>
</dbReference>
<dbReference type="NCBIfam" id="TIGR00652">
    <property type="entry name" value="DapF"/>
    <property type="match status" value="1"/>
</dbReference>
<dbReference type="PANTHER" id="PTHR31689:SF0">
    <property type="entry name" value="DIAMINOPIMELATE EPIMERASE"/>
    <property type="match status" value="1"/>
</dbReference>
<dbReference type="PANTHER" id="PTHR31689">
    <property type="entry name" value="DIAMINOPIMELATE EPIMERASE, CHLOROPLASTIC"/>
    <property type="match status" value="1"/>
</dbReference>
<dbReference type="Pfam" id="PF01678">
    <property type="entry name" value="DAP_epimerase"/>
    <property type="match status" value="2"/>
</dbReference>
<dbReference type="SUPFAM" id="SSF54506">
    <property type="entry name" value="Diaminopimelate epimerase-like"/>
    <property type="match status" value="1"/>
</dbReference>
<dbReference type="PROSITE" id="PS01326">
    <property type="entry name" value="DAP_EPIMERASE"/>
    <property type="match status" value="1"/>
</dbReference>
<accession>Q6CZG8</accession>
<organism>
    <name type="scientific">Pectobacterium atrosepticum (strain SCRI 1043 / ATCC BAA-672)</name>
    <name type="common">Erwinia carotovora subsp. atroseptica</name>
    <dbReference type="NCBI Taxonomy" id="218491"/>
    <lineage>
        <taxon>Bacteria</taxon>
        <taxon>Pseudomonadati</taxon>
        <taxon>Pseudomonadota</taxon>
        <taxon>Gammaproteobacteria</taxon>
        <taxon>Enterobacterales</taxon>
        <taxon>Pectobacteriaceae</taxon>
        <taxon>Pectobacterium</taxon>
    </lineage>
</organism>
<proteinExistence type="inferred from homology"/>
<evidence type="ECO:0000255" key="1">
    <source>
        <dbReference type="HAMAP-Rule" id="MF_00197"/>
    </source>
</evidence>
<name>DAPF_PECAS</name>
<keyword id="KW-0028">Amino-acid biosynthesis</keyword>
<keyword id="KW-0963">Cytoplasm</keyword>
<keyword id="KW-0413">Isomerase</keyword>
<keyword id="KW-0457">Lysine biosynthesis</keyword>
<keyword id="KW-1185">Reference proteome</keyword>
<feature type="chain" id="PRO_1000011878" description="Diaminopimelate epimerase">
    <location>
        <begin position="1"/>
        <end position="274"/>
    </location>
</feature>
<feature type="active site" description="Proton donor" evidence="1">
    <location>
        <position position="73"/>
    </location>
</feature>
<feature type="active site" description="Proton acceptor" evidence="1">
    <location>
        <position position="217"/>
    </location>
</feature>
<feature type="binding site" evidence="1">
    <location>
        <position position="11"/>
    </location>
    <ligand>
        <name>substrate</name>
    </ligand>
</feature>
<feature type="binding site" evidence="1">
    <location>
        <position position="44"/>
    </location>
    <ligand>
        <name>substrate</name>
    </ligand>
</feature>
<feature type="binding site" evidence="1">
    <location>
        <position position="64"/>
    </location>
    <ligand>
        <name>substrate</name>
    </ligand>
</feature>
<feature type="binding site" evidence="1">
    <location>
        <begin position="74"/>
        <end position="75"/>
    </location>
    <ligand>
        <name>substrate</name>
    </ligand>
</feature>
<feature type="binding site" evidence="1">
    <location>
        <position position="157"/>
    </location>
    <ligand>
        <name>substrate</name>
    </ligand>
</feature>
<feature type="binding site" evidence="1">
    <location>
        <position position="190"/>
    </location>
    <ligand>
        <name>substrate</name>
    </ligand>
</feature>
<feature type="binding site" evidence="1">
    <location>
        <begin position="208"/>
        <end position="209"/>
    </location>
    <ligand>
        <name>substrate</name>
    </ligand>
</feature>
<feature type="binding site" evidence="1">
    <location>
        <begin position="218"/>
        <end position="219"/>
    </location>
    <ligand>
        <name>substrate</name>
    </ligand>
</feature>
<feature type="site" description="Could be important to modulate the pK values of the two catalytic cysteine residues" evidence="1">
    <location>
        <position position="159"/>
    </location>
</feature>
<feature type="site" description="Could be important to modulate the pK values of the two catalytic cysteine residues" evidence="1">
    <location>
        <position position="208"/>
    </location>
</feature>
<feature type="site" description="Important for dimerization" evidence="1">
    <location>
        <position position="268"/>
    </location>
</feature>
<comment type="function">
    <text evidence="1">Catalyzes the stereoinversion of LL-2,6-diaminopimelate (L,L-DAP) to meso-diaminopimelate (meso-DAP), a precursor of L-lysine and an essential component of the bacterial peptidoglycan.</text>
</comment>
<comment type="catalytic activity">
    <reaction evidence="1">
        <text>(2S,6S)-2,6-diaminopimelate = meso-2,6-diaminopimelate</text>
        <dbReference type="Rhea" id="RHEA:15393"/>
        <dbReference type="ChEBI" id="CHEBI:57609"/>
        <dbReference type="ChEBI" id="CHEBI:57791"/>
        <dbReference type="EC" id="5.1.1.7"/>
    </reaction>
</comment>
<comment type="pathway">
    <text evidence="1">Amino-acid biosynthesis; L-lysine biosynthesis via DAP pathway; DL-2,6-diaminopimelate from LL-2,6-diaminopimelate: step 1/1.</text>
</comment>
<comment type="subunit">
    <text evidence="1">Homodimer.</text>
</comment>
<comment type="subcellular location">
    <subcellularLocation>
        <location evidence="1">Cytoplasm</location>
    </subcellularLocation>
</comment>
<comment type="similarity">
    <text evidence="1">Belongs to the diaminopimelate epimerase family.</text>
</comment>
<protein>
    <recommendedName>
        <fullName evidence="1">Diaminopimelate epimerase</fullName>
        <shortName evidence="1">DAP epimerase</shortName>
        <ecNumber evidence="1">5.1.1.7</ecNumber>
    </recommendedName>
    <alternativeName>
        <fullName evidence="1">PLP-independent amino acid racemase</fullName>
    </alternativeName>
</protein>
<sequence>MQFAKMHGLGNDFMVVDAVTQNVYFSPELIRRLADRHCGVGFDQLLVVEPPYDPELDFHYRIFNADGSEVAQCGNGARCFARFVRLKGLTNKRDIAVSTQTGRMVLSVTDDELVRVNMGEPNFEPQQVPFRAVKAEKTYIMRADEHTVLCGVVSMGNPHCVIQVEDVETAKVETLGPLLESHERFPDRANIGFMQVVDSQTVRLRVYERGAGETQACGSGACAAVAVGILQGLLSAKVRVSLPGGELDIQWDGPGHPLFMTGPATHVYDGFIHL</sequence>
<gene>
    <name evidence="1" type="primary">dapF</name>
    <name type="ordered locus">ECA4183</name>
</gene>